<gene>
    <name evidence="1" type="primary">hcp</name>
    <name type="ordered locus">Sbal195_1293</name>
</gene>
<dbReference type="EC" id="1.7.99.1" evidence="1"/>
<dbReference type="EMBL" id="CP000891">
    <property type="protein sequence ID" value="ABX48468.1"/>
    <property type="molecule type" value="Genomic_DNA"/>
</dbReference>
<dbReference type="RefSeq" id="WP_006085076.1">
    <property type="nucleotide sequence ID" value="NC_009997.1"/>
</dbReference>
<dbReference type="SMR" id="A9L5Q1"/>
<dbReference type="GeneID" id="11771561"/>
<dbReference type="KEGG" id="sbn:Sbal195_1293"/>
<dbReference type="HOGENOM" id="CLU_038344_2_0_6"/>
<dbReference type="Proteomes" id="UP000000770">
    <property type="component" value="Chromosome"/>
</dbReference>
<dbReference type="GO" id="GO:0005737">
    <property type="term" value="C:cytoplasm"/>
    <property type="evidence" value="ECO:0007669"/>
    <property type="project" value="UniProtKB-SubCell"/>
</dbReference>
<dbReference type="GO" id="GO:0051537">
    <property type="term" value="F:2 iron, 2 sulfur cluster binding"/>
    <property type="evidence" value="ECO:0007669"/>
    <property type="project" value="UniProtKB-KW"/>
</dbReference>
<dbReference type="GO" id="GO:0050418">
    <property type="term" value="F:hydroxylamine reductase activity"/>
    <property type="evidence" value="ECO:0007669"/>
    <property type="project" value="UniProtKB-UniRule"/>
</dbReference>
<dbReference type="GO" id="GO:0046872">
    <property type="term" value="F:metal ion binding"/>
    <property type="evidence" value="ECO:0007669"/>
    <property type="project" value="UniProtKB-KW"/>
</dbReference>
<dbReference type="GO" id="GO:0004601">
    <property type="term" value="F:peroxidase activity"/>
    <property type="evidence" value="ECO:0007669"/>
    <property type="project" value="TreeGrafter"/>
</dbReference>
<dbReference type="GO" id="GO:0042542">
    <property type="term" value="P:response to hydrogen peroxide"/>
    <property type="evidence" value="ECO:0007669"/>
    <property type="project" value="TreeGrafter"/>
</dbReference>
<dbReference type="CDD" id="cd01914">
    <property type="entry name" value="HCP"/>
    <property type="match status" value="1"/>
</dbReference>
<dbReference type="FunFam" id="1.20.1270.20:FF:000001">
    <property type="entry name" value="Hydroxylamine reductase"/>
    <property type="match status" value="1"/>
</dbReference>
<dbReference type="FunFam" id="1.20.1270.20:FF:000002">
    <property type="entry name" value="Hydroxylamine reductase"/>
    <property type="match status" value="1"/>
</dbReference>
<dbReference type="FunFam" id="3.40.50.2030:FF:000001">
    <property type="entry name" value="Hydroxylamine reductase"/>
    <property type="match status" value="1"/>
</dbReference>
<dbReference type="FunFam" id="3.40.50.2030:FF:000002">
    <property type="entry name" value="Hydroxylamine reductase"/>
    <property type="match status" value="1"/>
</dbReference>
<dbReference type="Gene3D" id="1.20.1270.20">
    <property type="match status" value="2"/>
</dbReference>
<dbReference type="Gene3D" id="3.40.50.2030">
    <property type="match status" value="2"/>
</dbReference>
<dbReference type="HAMAP" id="MF_00069">
    <property type="entry name" value="Hydroxylam_reduct"/>
    <property type="match status" value="1"/>
</dbReference>
<dbReference type="InterPro" id="IPR004137">
    <property type="entry name" value="HCP/CODH"/>
</dbReference>
<dbReference type="InterPro" id="IPR010048">
    <property type="entry name" value="Hydroxylam_reduct"/>
</dbReference>
<dbReference type="InterPro" id="IPR016099">
    <property type="entry name" value="Prismane-like_a/b-sand"/>
</dbReference>
<dbReference type="InterPro" id="IPR011254">
    <property type="entry name" value="Prismane-like_sf"/>
</dbReference>
<dbReference type="InterPro" id="IPR016100">
    <property type="entry name" value="Prismane_a-bundle"/>
</dbReference>
<dbReference type="NCBIfam" id="TIGR01703">
    <property type="entry name" value="hybrid_clust"/>
    <property type="match status" value="1"/>
</dbReference>
<dbReference type="NCBIfam" id="NF003658">
    <property type="entry name" value="PRK05290.1"/>
    <property type="match status" value="1"/>
</dbReference>
<dbReference type="PANTHER" id="PTHR30109">
    <property type="entry name" value="HYDROXYLAMINE REDUCTASE"/>
    <property type="match status" value="1"/>
</dbReference>
<dbReference type="PANTHER" id="PTHR30109:SF0">
    <property type="entry name" value="HYDROXYLAMINE REDUCTASE"/>
    <property type="match status" value="1"/>
</dbReference>
<dbReference type="Pfam" id="PF03063">
    <property type="entry name" value="Prismane"/>
    <property type="match status" value="1"/>
</dbReference>
<dbReference type="PIRSF" id="PIRSF000076">
    <property type="entry name" value="HCP"/>
    <property type="match status" value="1"/>
</dbReference>
<dbReference type="SUPFAM" id="SSF56821">
    <property type="entry name" value="Prismane protein-like"/>
    <property type="match status" value="1"/>
</dbReference>
<organism>
    <name type="scientific">Shewanella baltica (strain OS195)</name>
    <dbReference type="NCBI Taxonomy" id="399599"/>
    <lineage>
        <taxon>Bacteria</taxon>
        <taxon>Pseudomonadati</taxon>
        <taxon>Pseudomonadota</taxon>
        <taxon>Gammaproteobacteria</taxon>
        <taxon>Alteromonadales</taxon>
        <taxon>Shewanellaceae</taxon>
        <taxon>Shewanella</taxon>
    </lineage>
</organism>
<protein>
    <recommendedName>
        <fullName evidence="1">Hydroxylamine reductase</fullName>
        <ecNumber evidence="1">1.7.99.1</ecNumber>
    </recommendedName>
    <alternativeName>
        <fullName evidence="1">Hybrid-cluster protein</fullName>
        <shortName evidence="1">HCP</shortName>
    </alternativeName>
    <alternativeName>
        <fullName evidence="1">Prismane protein</fullName>
    </alternativeName>
</protein>
<reference key="1">
    <citation type="submission" date="2007-11" db="EMBL/GenBank/DDBJ databases">
        <title>Complete sequence of chromosome of Shewanella baltica OS195.</title>
        <authorList>
            <consortium name="US DOE Joint Genome Institute"/>
            <person name="Copeland A."/>
            <person name="Lucas S."/>
            <person name="Lapidus A."/>
            <person name="Barry K."/>
            <person name="Glavina del Rio T."/>
            <person name="Dalin E."/>
            <person name="Tice H."/>
            <person name="Pitluck S."/>
            <person name="Chain P."/>
            <person name="Malfatti S."/>
            <person name="Shin M."/>
            <person name="Vergez L."/>
            <person name="Schmutz J."/>
            <person name="Larimer F."/>
            <person name="Land M."/>
            <person name="Hauser L."/>
            <person name="Kyrpides N."/>
            <person name="Kim E."/>
            <person name="Brettar I."/>
            <person name="Rodrigues J."/>
            <person name="Konstantinidis K."/>
            <person name="Klappenbach J."/>
            <person name="Hofle M."/>
            <person name="Tiedje J."/>
            <person name="Richardson P."/>
        </authorList>
    </citation>
    <scope>NUCLEOTIDE SEQUENCE [LARGE SCALE GENOMIC DNA]</scope>
    <source>
        <strain>OS195</strain>
    </source>
</reference>
<proteinExistence type="inferred from homology"/>
<feature type="chain" id="PRO_1000075117" description="Hydroxylamine reductase">
    <location>
        <begin position="1"/>
        <end position="554"/>
    </location>
</feature>
<feature type="binding site" evidence="1">
    <location>
        <position position="3"/>
    </location>
    <ligand>
        <name>[2Fe-2S] cluster</name>
        <dbReference type="ChEBI" id="CHEBI:190135"/>
    </ligand>
</feature>
<feature type="binding site" evidence="1">
    <location>
        <position position="6"/>
    </location>
    <ligand>
        <name>[2Fe-2S] cluster</name>
        <dbReference type="ChEBI" id="CHEBI:190135"/>
    </ligand>
</feature>
<feature type="binding site" evidence="1">
    <location>
        <position position="18"/>
    </location>
    <ligand>
        <name>[2Fe-2S] cluster</name>
        <dbReference type="ChEBI" id="CHEBI:190135"/>
    </ligand>
</feature>
<feature type="binding site" evidence="1">
    <location>
        <position position="25"/>
    </location>
    <ligand>
        <name>[2Fe-2S] cluster</name>
        <dbReference type="ChEBI" id="CHEBI:190135"/>
    </ligand>
</feature>
<feature type="binding site" evidence="1">
    <location>
        <position position="252"/>
    </location>
    <ligand>
        <name>hybrid [4Fe-2O-2S] cluster</name>
        <dbReference type="ChEBI" id="CHEBI:60519"/>
    </ligand>
</feature>
<feature type="binding site" evidence="1">
    <location>
        <position position="276"/>
    </location>
    <ligand>
        <name>hybrid [4Fe-2O-2S] cluster</name>
        <dbReference type="ChEBI" id="CHEBI:60519"/>
    </ligand>
</feature>
<feature type="binding site" evidence="1">
    <location>
        <position position="320"/>
    </location>
    <ligand>
        <name>hybrid [4Fe-2O-2S] cluster</name>
        <dbReference type="ChEBI" id="CHEBI:60519"/>
    </ligand>
</feature>
<feature type="binding site" description="via persulfide group" evidence="1">
    <location>
        <position position="408"/>
    </location>
    <ligand>
        <name>hybrid [4Fe-2O-2S] cluster</name>
        <dbReference type="ChEBI" id="CHEBI:60519"/>
    </ligand>
</feature>
<feature type="binding site" evidence="1">
    <location>
        <position position="436"/>
    </location>
    <ligand>
        <name>hybrid [4Fe-2O-2S] cluster</name>
        <dbReference type="ChEBI" id="CHEBI:60519"/>
    </ligand>
</feature>
<feature type="binding site" evidence="1">
    <location>
        <position position="461"/>
    </location>
    <ligand>
        <name>hybrid [4Fe-2O-2S] cluster</name>
        <dbReference type="ChEBI" id="CHEBI:60519"/>
    </ligand>
</feature>
<feature type="binding site" evidence="1">
    <location>
        <position position="495"/>
    </location>
    <ligand>
        <name>hybrid [4Fe-2O-2S] cluster</name>
        <dbReference type="ChEBI" id="CHEBI:60519"/>
    </ligand>
</feature>
<feature type="binding site" evidence="1">
    <location>
        <position position="497"/>
    </location>
    <ligand>
        <name>hybrid [4Fe-2O-2S] cluster</name>
        <dbReference type="ChEBI" id="CHEBI:60519"/>
    </ligand>
</feature>
<feature type="modified residue" description="Cysteine persulfide" evidence="1">
    <location>
        <position position="408"/>
    </location>
</feature>
<name>HCP_SHEB9</name>
<sequence>MFCIQCEQTIRTPAGNGCSYSQGMCGKLAATSDLQDLLIYMLQGVSVYAVKARELGIIDAEIDSFVPKAFFATLTNVNFDDERIMAYTQQAAHYRAQLKASYEAACEQAGIAVEQVPQVAQLVLGTSKIEMLAQAPIALLNKDKHDVHEDIMGLRLLCLYGLKGAAAYMEHARVLGQTDADVAGRFHEIMSFLGEPSVDGDKLFTTAMDIGQLNYRIMAMLDAGETQAFGHPEPTVVNTKPFKGKAILVSGHDMKDLELILEQTVGKGINVFTHGEMLPALAYPAFKKYPHLVGNYGSAWQNQQQEFANFPGAVVMTSNCIIDPNVGSYSDRIFTRSIVGWPGVVHIEGDDFSAVIDKALALEGFIYDEIPHTITIGFAHNALMAAAPAVVENVKSGAIKHFFLVGGCDGDKADRSYFTELAKSTPKDSIILTLGCGKYKFNKLEFGDINGIPRLLDVGQCNDAYSAIQLAIALAEVFECDINELPLSLVLSWFEQKAIVVLLTLLSLGVKNIRTGPTPPAFLTANLAKILEEKFGLRNTTTVEADLKTMLNVA</sequence>
<comment type="function">
    <text evidence="1">Catalyzes the reduction of hydroxylamine to form NH(3) and H(2)O.</text>
</comment>
<comment type="catalytic activity">
    <reaction evidence="1">
        <text>A + NH4(+) + H2O = hydroxylamine + AH2 + H(+)</text>
        <dbReference type="Rhea" id="RHEA:22052"/>
        <dbReference type="ChEBI" id="CHEBI:13193"/>
        <dbReference type="ChEBI" id="CHEBI:15377"/>
        <dbReference type="ChEBI" id="CHEBI:15378"/>
        <dbReference type="ChEBI" id="CHEBI:15429"/>
        <dbReference type="ChEBI" id="CHEBI:17499"/>
        <dbReference type="ChEBI" id="CHEBI:28938"/>
        <dbReference type="EC" id="1.7.99.1"/>
    </reaction>
</comment>
<comment type="cofactor">
    <cofactor evidence="1">
        <name>[2Fe-2S] cluster</name>
        <dbReference type="ChEBI" id="CHEBI:190135"/>
    </cofactor>
    <text evidence="1">Binds 1 [2Fe-2S] cluster.</text>
</comment>
<comment type="cofactor">
    <cofactor evidence="1">
        <name>hybrid [4Fe-2O-2S] cluster</name>
        <dbReference type="ChEBI" id="CHEBI:60519"/>
    </cofactor>
    <text evidence="1">Binds 1 hybrid [4Fe-2O-2S] cluster.</text>
</comment>
<comment type="subcellular location">
    <subcellularLocation>
        <location evidence="1">Cytoplasm</location>
    </subcellularLocation>
</comment>
<comment type="similarity">
    <text evidence="1">Belongs to the HCP family.</text>
</comment>
<accession>A9L5Q1</accession>
<evidence type="ECO:0000255" key="1">
    <source>
        <dbReference type="HAMAP-Rule" id="MF_00069"/>
    </source>
</evidence>
<keyword id="KW-0001">2Fe-2S</keyword>
<keyword id="KW-0963">Cytoplasm</keyword>
<keyword id="KW-0408">Iron</keyword>
<keyword id="KW-0411">Iron-sulfur</keyword>
<keyword id="KW-0479">Metal-binding</keyword>
<keyword id="KW-0560">Oxidoreductase</keyword>